<sequence length="122" mass="13329">MIQMQSTLEVACNSGARRVQCIKVLGGSHRRYAGIGDVIKVSVKEAIPRGKAKKGDVYNAVVVRTKKGVRRPDGSVIRFDRNAAVLLNANLAPIGTRIFGPVTRELRTEQFMKIVSLAPEVL</sequence>
<organism>
    <name type="scientific">Shewanella pealeana (strain ATCC 700345 / ANG-SQ1)</name>
    <dbReference type="NCBI Taxonomy" id="398579"/>
    <lineage>
        <taxon>Bacteria</taxon>
        <taxon>Pseudomonadati</taxon>
        <taxon>Pseudomonadota</taxon>
        <taxon>Gammaproteobacteria</taxon>
        <taxon>Alteromonadales</taxon>
        <taxon>Shewanellaceae</taxon>
        <taxon>Shewanella</taxon>
    </lineage>
</organism>
<protein>
    <recommendedName>
        <fullName evidence="1">Large ribosomal subunit protein uL14</fullName>
    </recommendedName>
    <alternativeName>
        <fullName evidence="2">50S ribosomal protein L14</fullName>
    </alternativeName>
</protein>
<feature type="chain" id="PRO_1000087148" description="Large ribosomal subunit protein uL14">
    <location>
        <begin position="1"/>
        <end position="122"/>
    </location>
</feature>
<accession>A8GYY6</accession>
<dbReference type="EMBL" id="CP000851">
    <property type="protein sequence ID" value="ABV85523.1"/>
    <property type="molecule type" value="Genomic_DNA"/>
</dbReference>
<dbReference type="RefSeq" id="WP_011863976.1">
    <property type="nucleotide sequence ID" value="NC_009901.1"/>
</dbReference>
<dbReference type="SMR" id="A8GYY6"/>
<dbReference type="STRING" id="398579.Spea_0194"/>
<dbReference type="KEGG" id="spl:Spea_0194"/>
<dbReference type="eggNOG" id="COG0093">
    <property type="taxonomic scope" value="Bacteria"/>
</dbReference>
<dbReference type="HOGENOM" id="CLU_095071_2_1_6"/>
<dbReference type="OrthoDB" id="9806379at2"/>
<dbReference type="Proteomes" id="UP000002608">
    <property type="component" value="Chromosome"/>
</dbReference>
<dbReference type="GO" id="GO:0022625">
    <property type="term" value="C:cytosolic large ribosomal subunit"/>
    <property type="evidence" value="ECO:0007669"/>
    <property type="project" value="TreeGrafter"/>
</dbReference>
<dbReference type="GO" id="GO:0070180">
    <property type="term" value="F:large ribosomal subunit rRNA binding"/>
    <property type="evidence" value="ECO:0007669"/>
    <property type="project" value="TreeGrafter"/>
</dbReference>
<dbReference type="GO" id="GO:0003735">
    <property type="term" value="F:structural constituent of ribosome"/>
    <property type="evidence" value="ECO:0007669"/>
    <property type="project" value="InterPro"/>
</dbReference>
<dbReference type="GO" id="GO:0006412">
    <property type="term" value="P:translation"/>
    <property type="evidence" value="ECO:0007669"/>
    <property type="project" value="UniProtKB-UniRule"/>
</dbReference>
<dbReference type="CDD" id="cd00337">
    <property type="entry name" value="Ribosomal_uL14"/>
    <property type="match status" value="1"/>
</dbReference>
<dbReference type="FunFam" id="2.40.150.20:FF:000001">
    <property type="entry name" value="50S ribosomal protein L14"/>
    <property type="match status" value="1"/>
</dbReference>
<dbReference type="Gene3D" id="2.40.150.20">
    <property type="entry name" value="Ribosomal protein L14"/>
    <property type="match status" value="1"/>
</dbReference>
<dbReference type="HAMAP" id="MF_01367">
    <property type="entry name" value="Ribosomal_uL14"/>
    <property type="match status" value="1"/>
</dbReference>
<dbReference type="InterPro" id="IPR000218">
    <property type="entry name" value="Ribosomal_uL14"/>
</dbReference>
<dbReference type="InterPro" id="IPR005745">
    <property type="entry name" value="Ribosomal_uL14_bac-type"/>
</dbReference>
<dbReference type="InterPro" id="IPR019972">
    <property type="entry name" value="Ribosomal_uL14_CS"/>
</dbReference>
<dbReference type="InterPro" id="IPR036853">
    <property type="entry name" value="Ribosomal_uL14_sf"/>
</dbReference>
<dbReference type="NCBIfam" id="TIGR01067">
    <property type="entry name" value="rplN_bact"/>
    <property type="match status" value="1"/>
</dbReference>
<dbReference type="PANTHER" id="PTHR11761">
    <property type="entry name" value="50S/60S RIBOSOMAL PROTEIN L14/L23"/>
    <property type="match status" value="1"/>
</dbReference>
<dbReference type="PANTHER" id="PTHR11761:SF3">
    <property type="entry name" value="LARGE RIBOSOMAL SUBUNIT PROTEIN UL14M"/>
    <property type="match status" value="1"/>
</dbReference>
<dbReference type="Pfam" id="PF00238">
    <property type="entry name" value="Ribosomal_L14"/>
    <property type="match status" value="1"/>
</dbReference>
<dbReference type="SMART" id="SM01374">
    <property type="entry name" value="Ribosomal_L14"/>
    <property type="match status" value="1"/>
</dbReference>
<dbReference type="SUPFAM" id="SSF50193">
    <property type="entry name" value="Ribosomal protein L14"/>
    <property type="match status" value="1"/>
</dbReference>
<dbReference type="PROSITE" id="PS00049">
    <property type="entry name" value="RIBOSOMAL_L14"/>
    <property type="match status" value="1"/>
</dbReference>
<reference key="1">
    <citation type="submission" date="2007-10" db="EMBL/GenBank/DDBJ databases">
        <title>Complete sequence of Shewanella pealeana ATCC 700345.</title>
        <authorList>
            <consortium name="US DOE Joint Genome Institute"/>
            <person name="Copeland A."/>
            <person name="Lucas S."/>
            <person name="Lapidus A."/>
            <person name="Barry K."/>
            <person name="Glavina del Rio T."/>
            <person name="Dalin E."/>
            <person name="Tice H."/>
            <person name="Pitluck S."/>
            <person name="Chertkov O."/>
            <person name="Brettin T."/>
            <person name="Bruce D."/>
            <person name="Detter J.C."/>
            <person name="Han C."/>
            <person name="Schmutz J."/>
            <person name="Larimer F."/>
            <person name="Land M."/>
            <person name="Hauser L."/>
            <person name="Kyrpides N."/>
            <person name="Kim E."/>
            <person name="Zhao J.-S.Z."/>
            <person name="Manno D."/>
            <person name="Hawari J."/>
            <person name="Richardson P."/>
        </authorList>
    </citation>
    <scope>NUCLEOTIDE SEQUENCE [LARGE SCALE GENOMIC DNA]</scope>
    <source>
        <strain>ATCC 700345 / ANG-SQ1</strain>
    </source>
</reference>
<name>RL14_SHEPA</name>
<proteinExistence type="inferred from homology"/>
<evidence type="ECO:0000255" key="1">
    <source>
        <dbReference type="HAMAP-Rule" id="MF_01367"/>
    </source>
</evidence>
<evidence type="ECO:0000305" key="2"/>
<keyword id="KW-1185">Reference proteome</keyword>
<keyword id="KW-0687">Ribonucleoprotein</keyword>
<keyword id="KW-0689">Ribosomal protein</keyword>
<keyword id="KW-0694">RNA-binding</keyword>
<keyword id="KW-0699">rRNA-binding</keyword>
<comment type="function">
    <text evidence="1">Binds to 23S rRNA. Forms part of two intersubunit bridges in the 70S ribosome.</text>
</comment>
<comment type="subunit">
    <text evidence="1">Part of the 50S ribosomal subunit. Forms a cluster with proteins L3 and L19. In the 70S ribosome, L14 and L19 interact and together make contacts with the 16S rRNA in bridges B5 and B8.</text>
</comment>
<comment type="similarity">
    <text evidence="1">Belongs to the universal ribosomal protein uL14 family.</text>
</comment>
<gene>
    <name evidence="1" type="primary">rplN</name>
    <name type="ordered locus">Spea_0194</name>
</gene>